<proteinExistence type="inferred from homology"/>
<name>METJ_ERWT9</name>
<dbReference type="EMBL" id="CU468135">
    <property type="protein sequence ID" value="CAO95172.1"/>
    <property type="molecule type" value="Genomic_DNA"/>
</dbReference>
<dbReference type="RefSeq" id="WP_012439898.1">
    <property type="nucleotide sequence ID" value="NC_010694.1"/>
</dbReference>
<dbReference type="SMR" id="B2VI92"/>
<dbReference type="STRING" id="465817.ETA_01260"/>
<dbReference type="KEGG" id="eta:ETA_01260"/>
<dbReference type="eggNOG" id="COG3060">
    <property type="taxonomic scope" value="Bacteria"/>
</dbReference>
<dbReference type="HOGENOM" id="CLU_142318_0_0_6"/>
<dbReference type="OrthoDB" id="5680896at2"/>
<dbReference type="Proteomes" id="UP000001726">
    <property type="component" value="Chromosome"/>
</dbReference>
<dbReference type="GO" id="GO:0005737">
    <property type="term" value="C:cytoplasm"/>
    <property type="evidence" value="ECO:0007669"/>
    <property type="project" value="UniProtKB-SubCell"/>
</dbReference>
<dbReference type="GO" id="GO:0003677">
    <property type="term" value="F:DNA binding"/>
    <property type="evidence" value="ECO:0007669"/>
    <property type="project" value="UniProtKB-KW"/>
</dbReference>
<dbReference type="GO" id="GO:0003700">
    <property type="term" value="F:DNA-binding transcription factor activity"/>
    <property type="evidence" value="ECO:0007669"/>
    <property type="project" value="InterPro"/>
</dbReference>
<dbReference type="GO" id="GO:0009086">
    <property type="term" value="P:methionine biosynthetic process"/>
    <property type="evidence" value="ECO:0007669"/>
    <property type="project" value="UniProtKB-UniRule"/>
</dbReference>
<dbReference type="GO" id="GO:0045892">
    <property type="term" value="P:negative regulation of DNA-templated transcription"/>
    <property type="evidence" value="ECO:0007669"/>
    <property type="project" value="UniProtKB-UniRule"/>
</dbReference>
<dbReference type="CDD" id="cd00490">
    <property type="entry name" value="Met_repressor_MetJ"/>
    <property type="match status" value="1"/>
</dbReference>
<dbReference type="FunFam" id="1.10.140.10:FF:000001">
    <property type="entry name" value="Met repressor"/>
    <property type="match status" value="1"/>
</dbReference>
<dbReference type="Gene3D" id="1.10.140.10">
    <property type="entry name" value="MET Apo-Repressor, subunit A"/>
    <property type="match status" value="1"/>
</dbReference>
<dbReference type="HAMAP" id="MF_00744">
    <property type="entry name" value="MetJ"/>
    <property type="match status" value="1"/>
</dbReference>
<dbReference type="InterPro" id="IPR002084">
    <property type="entry name" value="Met_repressor_MetJ"/>
</dbReference>
<dbReference type="InterPro" id="IPR023453">
    <property type="entry name" value="Met_repressor_MetJ_dom_sf"/>
</dbReference>
<dbReference type="InterPro" id="IPR010985">
    <property type="entry name" value="Ribbon_hlx_hlx"/>
</dbReference>
<dbReference type="NCBIfam" id="NF003622">
    <property type="entry name" value="PRK05264.1"/>
    <property type="match status" value="1"/>
</dbReference>
<dbReference type="Pfam" id="PF01340">
    <property type="entry name" value="MetJ"/>
    <property type="match status" value="1"/>
</dbReference>
<dbReference type="SUPFAM" id="SSF47598">
    <property type="entry name" value="Ribbon-helix-helix"/>
    <property type="match status" value="1"/>
</dbReference>
<protein>
    <recommendedName>
        <fullName evidence="1">Met repressor</fullName>
    </recommendedName>
    <alternativeName>
        <fullName evidence="1">Met regulon regulatory protein MetJ</fullName>
    </alternativeName>
</protein>
<keyword id="KW-0028">Amino-acid biosynthesis</keyword>
<keyword id="KW-0963">Cytoplasm</keyword>
<keyword id="KW-0238">DNA-binding</keyword>
<keyword id="KW-0486">Methionine biosynthesis</keyword>
<keyword id="KW-1185">Reference proteome</keyword>
<keyword id="KW-0678">Repressor</keyword>
<keyword id="KW-0804">Transcription</keyword>
<keyword id="KW-0805">Transcription regulation</keyword>
<reference key="1">
    <citation type="journal article" date="2008" name="Environ. Microbiol.">
        <title>The genome of Erwinia tasmaniensis strain Et1/99, a non-pathogenic bacterium in the genus Erwinia.</title>
        <authorList>
            <person name="Kube M."/>
            <person name="Migdoll A.M."/>
            <person name="Mueller I."/>
            <person name="Kuhl H."/>
            <person name="Beck A."/>
            <person name="Reinhardt R."/>
            <person name="Geider K."/>
        </authorList>
    </citation>
    <scope>NUCLEOTIDE SEQUENCE [LARGE SCALE GENOMIC DNA]</scope>
    <source>
        <strain>DSM 17950 / CFBP 7177 / CIP 109463 / NCPPB 4357 / Et1/99</strain>
    </source>
</reference>
<accession>B2VI92</accession>
<gene>
    <name evidence="1" type="primary">metJ</name>
    <name type="ordered locus">ETA_01260</name>
</gene>
<comment type="function">
    <text evidence="1">This regulatory protein, when combined with SAM (S-adenosylmethionine) represses the expression of the methionine regulon and of enzymes involved in SAM synthesis.</text>
</comment>
<comment type="subunit">
    <text evidence="1">Homodimer.</text>
</comment>
<comment type="subcellular location">
    <subcellularLocation>
        <location evidence="1">Cytoplasm</location>
    </subcellularLocation>
</comment>
<comment type="domain">
    <text>Does not bind DNA by a helix-turn-helix motif.</text>
</comment>
<comment type="similarity">
    <text evidence="1">Belongs to the MetJ family.</text>
</comment>
<organism>
    <name type="scientific">Erwinia tasmaniensis (strain DSM 17950 / CFBP 7177 / CIP 109463 / NCPPB 4357 / Et1/99)</name>
    <dbReference type="NCBI Taxonomy" id="465817"/>
    <lineage>
        <taxon>Bacteria</taxon>
        <taxon>Pseudomonadati</taxon>
        <taxon>Pseudomonadota</taxon>
        <taxon>Gammaproteobacteria</taxon>
        <taxon>Enterobacterales</taxon>
        <taxon>Erwiniaceae</taxon>
        <taxon>Erwinia</taxon>
    </lineage>
</organism>
<sequence length="105" mass="12111">MAEWNGEYISPYAEHGKKSEQVKKITVSIPLKVLKILTDERTRRQVNNLRHATNSELLCEAFLHAFTGQPLPDDVDLRKERSDEIPEEAKAIMRAMGVDPDTWEY</sequence>
<evidence type="ECO:0000255" key="1">
    <source>
        <dbReference type="HAMAP-Rule" id="MF_00744"/>
    </source>
</evidence>
<feature type="chain" id="PRO_1000191208" description="Met repressor">
    <location>
        <begin position="1"/>
        <end position="105"/>
    </location>
</feature>